<comment type="function">
    <text evidence="1">Participates actively in the response to hyperosmotic and heat shock by preventing the aggregation of stress-denatured proteins, in association with DnaK and GrpE. It is the nucleotide exchange factor for DnaK and may function as a thermosensor. Unfolded proteins bind initially to DnaJ; upon interaction with the DnaJ-bound protein, DnaK hydrolyzes its bound ATP, resulting in the formation of a stable complex. GrpE releases ADP from DnaK; ATP binding to DnaK triggers the release of the substrate protein, thus completing the reaction cycle. Several rounds of ATP-dependent interactions between DnaJ, DnaK and GrpE are required for fully efficient folding.</text>
</comment>
<comment type="subunit">
    <text evidence="1">Homodimer.</text>
</comment>
<comment type="subcellular location">
    <subcellularLocation>
        <location evidence="1">Cytoplasm</location>
    </subcellularLocation>
</comment>
<comment type="similarity">
    <text evidence="1">Belongs to the GrpE family.</text>
</comment>
<organism>
    <name type="scientific">Paraburkholderia phytofirmans (strain DSM 17436 / LMG 22146 / PsJN)</name>
    <name type="common">Burkholderia phytofirmans</name>
    <dbReference type="NCBI Taxonomy" id="398527"/>
    <lineage>
        <taxon>Bacteria</taxon>
        <taxon>Pseudomonadati</taxon>
        <taxon>Pseudomonadota</taxon>
        <taxon>Betaproteobacteria</taxon>
        <taxon>Burkholderiales</taxon>
        <taxon>Burkholderiaceae</taxon>
        <taxon>Paraburkholderia</taxon>
    </lineage>
</organism>
<sequence>MENTQENPTSQNPTPADETARQAAEAAAPQQEAAANAATDSPVNAEQSALAEAEAKIAELQESFLRAKAETENVRRRAQEDVAKAHKFAIESFAEHLLPVIDSLEAAVAHSSDDLQKVREGVELTLRQLTGALEKGRVVALNPVGEKFDPHRHQAISMVPAEQEPNTVVAVLQKGFVIADRVLRPALVTVAAPK</sequence>
<proteinExistence type="inferred from homology"/>
<protein>
    <recommendedName>
        <fullName evidence="1">Protein GrpE</fullName>
    </recommendedName>
    <alternativeName>
        <fullName evidence="1">HSP-70 cofactor</fullName>
    </alternativeName>
</protein>
<gene>
    <name evidence="1" type="primary">grpE</name>
    <name type="ordered locus">Bphyt_0736</name>
</gene>
<accession>B2SXC5</accession>
<evidence type="ECO:0000255" key="1">
    <source>
        <dbReference type="HAMAP-Rule" id="MF_01151"/>
    </source>
</evidence>
<evidence type="ECO:0000256" key="2">
    <source>
        <dbReference type="SAM" id="MobiDB-lite"/>
    </source>
</evidence>
<name>GRPE_PARPJ</name>
<keyword id="KW-0143">Chaperone</keyword>
<keyword id="KW-0963">Cytoplasm</keyword>
<keyword id="KW-0346">Stress response</keyword>
<dbReference type="EMBL" id="CP001052">
    <property type="protein sequence ID" value="ACD15160.1"/>
    <property type="molecule type" value="Genomic_DNA"/>
</dbReference>
<dbReference type="RefSeq" id="WP_012431796.1">
    <property type="nucleotide sequence ID" value="NC_010681.1"/>
</dbReference>
<dbReference type="SMR" id="B2SXC5"/>
<dbReference type="STRING" id="398527.Bphyt_0736"/>
<dbReference type="KEGG" id="bpy:Bphyt_0736"/>
<dbReference type="eggNOG" id="COG0576">
    <property type="taxonomic scope" value="Bacteria"/>
</dbReference>
<dbReference type="HOGENOM" id="CLU_057217_6_1_4"/>
<dbReference type="OrthoDB" id="9789811at2"/>
<dbReference type="Proteomes" id="UP000001739">
    <property type="component" value="Chromosome 1"/>
</dbReference>
<dbReference type="GO" id="GO:0005829">
    <property type="term" value="C:cytosol"/>
    <property type="evidence" value="ECO:0007669"/>
    <property type="project" value="TreeGrafter"/>
</dbReference>
<dbReference type="GO" id="GO:0000774">
    <property type="term" value="F:adenyl-nucleotide exchange factor activity"/>
    <property type="evidence" value="ECO:0007669"/>
    <property type="project" value="InterPro"/>
</dbReference>
<dbReference type="GO" id="GO:0042803">
    <property type="term" value="F:protein homodimerization activity"/>
    <property type="evidence" value="ECO:0007669"/>
    <property type="project" value="InterPro"/>
</dbReference>
<dbReference type="GO" id="GO:0051087">
    <property type="term" value="F:protein-folding chaperone binding"/>
    <property type="evidence" value="ECO:0007669"/>
    <property type="project" value="InterPro"/>
</dbReference>
<dbReference type="GO" id="GO:0051082">
    <property type="term" value="F:unfolded protein binding"/>
    <property type="evidence" value="ECO:0007669"/>
    <property type="project" value="TreeGrafter"/>
</dbReference>
<dbReference type="GO" id="GO:0006457">
    <property type="term" value="P:protein folding"/>
    <property type="evidence" value="ECO:0007669"/>
    <property type="project" value="InterPro"/>
</dbReference>
<dbReference type="CDD" id="cd00446">
    <property type="entry name" value="GrpE"/>
    <property type="match status" value="1"/>
</dbReference>
<dbReference type="FunFam" id="2.30.22.10:FF:000001">
    <property type="entry name" value="Protein GrpE"/>
    <property type="match status" value="1"/>
</dbReference>
<dbReference type="Gene3D" id="3.90.20.20">
    <property type="match status" value="1"/>
</dbReference>
<dbReference type="Gene3D" id="2.30.22.10">
    <property type="entry name" value="Head domain of nucleotide exchange factor GrpE"/>
    <property type="match status" value="1"/>
</dbReference>
<dbReference type="HAMAP" id="MF_01151">
    <property type="entry name" value="GrpE"/>
    <property type="match status" value="1"/>
</dbReference>
<dbReference type="InterPro" id="IPR000740">
    <property type="entry name" value="GrpE"/>
</dbReference>
<dbReference type="InterPro" id="IPR013805">
    <property type="entry name" value="GrpE_coiled_coil"/>
</dbReference>
<dbReference type="InterPro" id="IPR009012">
    <property type="entry name" value="GrpE_head"/>
</dbReference>
<dbReference type="NCBIfam" id="NF010737">
    <property type="entry name" value="PRK14139.1"/>
    <property type="match status" value="1"/>
</dbReference>
<dbReference type="NCBIfam" id="NF010738">
    <property type="entry name" value="PRK14140.1"/>
    <property type="match status" value="1"/>
</dbReference>
<dbReference type="NCBIfam" id="NF010748">
    <property type="entry name" value="PRK14150.1"/>
    <property type="match status" value="1"/>
</dbReference>
<dbReference type="PANTHER" id="PTHR21237">
    <property type="entry name" value="GRPE PROTEIN"/>
    <property type="match status" value="1"/>
</dbReference>
<dbReference type="PANTHER" id="PTHR21237:SF23">
    <property type="entry name" value="GRPE PROTEIN HOMOLOG, MITOCHONDRIAL"/>
    <property type="match status" value="1"/>
</dbReference>
<dbReference type="Pfam" id="PF01025">
    <property type="entry name" value="GrpE"/>
    <property type="match status" value="1"/>
</dbReference>
<dbReference type="PRINTS" id="PR00773">
    <property type="entry name" value="GRPEPROTEIN"/>
</dbReference>
<dbReference type="SUPFAM" id="SSF58014">
    <property type="entry name" value="Coiled-coil domain of nucleotide exchange factor GrpE"/>
    <property type="match status" value="1"/>
</dbReference>
<dbReference type="SUPFAM" id="SSF51064">
    <property type="entry name" value="Head domain of nucleotide exchange factor GrpE"/>
    <property type="match status" value="1"/>
</dbReference>
<dbReference type="PROSITE" id="PS01071">
    <property type="entry name" value="GRPE"/>
    <property type="match status" value="1"/>
</dbReference>
<feature type="chain" id="PRO_1000137551" description="Protein GrpE">
    <location>
        <begin position="1"/>
        <end position="194"/>
    </location>
</feature>
<feature type="region of interest" description="Disordered" evidence="2">
    <location>
        <begin position="1"/>
        <end position="50"/>
    </location>
</feature>
<feature type="compositionally biased region" description="Polar residues" evidence="2">
    <location>
        <begin position="1"/>
        <end position="14"/>
    </location>
</feature>
<feature type="compositionally biased region" description="Low complexity" evidence="2">
    <location>
        <begin position="21"/>
        <end position="38"/>
    </location>
</feature>
<reference key="1">
    <citation type="journal article" date="2011" name="J. Bacteriol.">
        <title>Complete genome sequence of the plant growth-promoting endophyte Burkholderia phytofirmans strain PsJN.</title>
        <authorList>
            <person name="Weilharter A."/>
            <person name="Mitter B."/>
            <person name="Shin M.V."/>
            <person name="Chain P.S."/>
            <person name="Nowak J."/>
            <person name="Sessitsch A."/>
        </authorList>
    </citation>
    <scope>NUCLEOTIDE SEQUENCE [LARGE SCALE GENOMIC DNA]</scope>
    <source>
        <strain>DSM 17436 / LMG 22146 / PsJN</strain>
    </source>
</reference>